<dbReference type="EC" id="3.2.2.-" evidence="1"/>
<dbReference type="EMBL" id="CP000485">
    <property type="protein sequence ID" value="ABK84162.1"/>
    <property type="molecule type" value="Genomic_DNA"/>
</dbReference>
<dbReference type="RefSeq" id="WP_001148801.1">
    <property type="nucleotide sequence ID" value="NC_008600.1"/>
</dbReference>
<dbReference type="SMR" id="A0RAB9"/>
<dbReference type="KEGG" id="btl:BALH_0786"/>
<dbReference type="HOGENOM" id="CLU_060471_0_2_9"/>
<dbReference type="GO" id="GO:0003905">
    <property type="term" value="F:alkylbase DNA N-glycosylase activity"/>
    <property type="evidence" value="ECO:0007669"/>
    <property type="project" value="InterPro"/>
</dbReference>
<dbReference type="GO" id="GO:0003677">
    <property type="term" value="F:DNA binding"/>
    <property type="evidence" value="ECO:0007669"/>
    <property type="project" value="InterPro"/>
</dbReference>
<dbReference type="GO" id="GO:0006284">
    <property type="term" value="P:base-excision repair"/>
    <property type="evidence" value="ECO:0007669"/>
    <property type="project" value="InterPro"/>
</dbReference>
<dbReference type="CDD" id="cd00540">
    <property type="entry name" value="AAG"/>
    <property type="match status" value="1"/>
</dbReference>
<dbReference type="FunFam" id="3.10.300.10:FF:000001">
    <property type="entry name" value="Putative 3-methyladenine DNA glycosylase"/>
    <property type="match status" value="1"/>
</dbReference>
<dbReference type="Gene3D" id="3.10.300.10">
    <property type="entry name" value="Methylpurine-DNA glycosylase (MPG)"/>
    <property type="match status" value="1"/>
</dbReference>
<dbReference type="HAMAP" id="MF_00527">
    <property type="entry name" value="3MGH"/>
    <property type="match status" value="1"/>
</dbReference>
<dbReference type="InterPro" id="IPR011034">
    <property type="entry name" value="Formyl_transferase-like_C_sf"/>
</dbReference>
<dbReference type="InterPro" id="IPR003180">
    <property type="entry name" value="MPG"/>
</dbReference>
<dbReference type="InterPro" id="IPR036995">
    <property type="entry name" value="MPG_sf"/>
</dbReference>
<dbReference type="NCBIfam" id="TIGR00567">
    <property type="entry name" value="3mg"/>
    <property type="match status" value="1"/>
</dbReference>
<dbReference type="NCBIfam" id="NF002001">
    <property type="entry name" value="PRK00802.1-1"/>
    <property type="match status" value="1"/>
</dbReference>
<dbReference type="NCBIfam" id="NF002003">
    <property type="entry name" value="PRK00802.1-3"/>
    <property type="match status" value="1"/>
</dbReference>
<dbReference type="PANTHER" id="PTHR10429">
    <property type="entry name" value="DNA-3-METHYLADENINE GLYCOSYLASE"/>
    <property type="match status" value="1"/>
</dbReference>
<dbReference type="PANTHER" id="PTHR10429:SF0">
    <property type="entry name" value="DNA-3-METHYLADENINE GLYCOSYLASE"/>
    <property type="match status" value="1"/>
</dbReference>
<dbReference type="Pfam" id="PF02245">
    <property type="entry name" value="Pur_DNA_glyco"/>
    <property type="match status" value="1"/>
</dbReference>
<dbReference type="SUPFAM" id="SSF50486">
    <property type="entry name" value="FMT C-terminal domain-like"/>
    <property type="match status" value="1"/>
</dbReference>
<gene>
    <name type="ordered locus">BALH_0786</name>
</gene>
<keyword id="KW-0227">DNA damage</keyword>
<keyword id="KW-0234">DNA repair</keyword>
<keyword id="KW-0378">Hydrolase</keyword>
<name>3MGH_BACAH</name>
<comment type="similarity">
    <text evidence="1">Belongs to the DNA glycosylase MPG family.</text>
</comment>
<evidence type="ECO:0000255" key="1">
    <source>
        <dbReference type="HAMAP-Rule" id="MF_00527"/>
    </source>
</evidence>
<organism>
    <name type="scientific">Bacillus thuringiensis (strain Al Hakam)</name>
    <dbReference type="NCBI Taxonomy" id="412694"/>
    <lineage>
        <taxon>Bacteria</taxon>
        <taxon>Bacillati</taxon>
        <taxon>Bacillota</taxon>
        <taxon>Bacilli</taxon>
        <taxon>Bacillales</taxon>
        <taxon>Bacillaceae</taxon>
        <taxon>Bacillus</taxon>
        <taxon>Bacillus cereus group</taxon>
    </lineage>
</organism>
<reference key="1">
    <citation type="journal article" date="2007" name="J. Bacteriol.">
        <title>The complete genome sequence of Bacillus thuringiensis Al Hakam.</title>
        <authorList>
            <person name="Challacombe J.F."/>
            <person name="Altherr M.R."/>
            <person name="Xie G."/>
            <person name="Bhotika S.S."/>
            <person name="Brown N."/>
            <person name="Bruce D."/>
            <person name="Campbell C.S."/>
            <person name="Campbell M.L."/>
            <person name="Chen J."/>
            <person name="Chertkov O."/>
            <person name="Cleland C."/>
            <person name="Dimitrijevic M."/>
            <person name="Doggett N.A."/>
            <person name="Fawcett J.J."/>
            <person name="Glavina T."/>
            <person name="Goodwin L.A."/>
            <person name="Green L.D."/>
            <person name="Han C.S."/>
            <person name="Hill K.K."/>
            <person name="Hitchcock P."/>
            <person name="Jackson P.J."/>
            <person name="Keim P."/>
            <person name="Kewalramani A.R."/>
            <person name="Longmire J."/>
            <person name="Lucas S."/>
            <person name="Malfatti S."/>
            <person name="Martinez D."/>
            <person name="McMurry K."/>
            <person name="Meincke L.J."/>
            <person name="Misra M."/>
            <person name="Moseman B.L."/>
            <person name="Mundt M."/>
            <person name="Munk A.C."/>
            <person name="Okinaka R.T."/>
            <person name="Parson-Quintana B."/>
            <person name="Reilly L.P."/>
            <person name="Richardson P."/>
            <person name="Robinson D.L."/>
            <person name="Saunders E."/>
            <person name="Tapia R."/>
            <person name="Tesmer J.G."/>
            <person name="Thayer N."/>
            <person name="Thompson L.S."/>
            <person name="Tice H."/>
            <person name="Ticknor L.O."/>
            <person name="Wills P.L."/>
            <person name="Gilna P."/>
            <person name="Brettin T.S."/>
        </authorList>
    </citation>
    <scope>NUCLEOTIDE SEQUENCE [LARGE SCALE GENOMIC DNA]</scope>
    <source>
        <strain>Al Hakam</strain>
    </source>
</reference>
<proteinExistence type="inferred from homology"/>
<sequence>MQAPPSFYEGDTLEVAKKLLGQKLVHIVDGIKRSGIIVEVEAYKGPGDKAAHSYGGRRTDRTEVMFGAPGHAYVYLIYGMYHCFNVITAPVGTPQGVLIRAIEPVDGIEEIKLARYNKTDITKAQYKNLTNGPGKLCRALGITLEERGVSLQSDTLHIELVPEEEHISSQYKITAGPRINIDYAEEAVHYPWRFYYEGHPFVSKK</sequence>
<accession>A0RAB9</accession>
<feature type="chain" id="PRO_1000050982" description="Putative 3-methyladenine DNA glycosylase">
    <location>
        <begin position="1"/>
        <end position="205"/>
    </location>
</feature>
<protein>
    <recommendedName>
        <fullName evidence="1">Putative 3-methyladenine DNA glycosylase</fullName>
        <ecNumber evidence="1">3.2.2.-</ecNumber>
    </recommendedName>
</protein>